<protein>
    <recommendedName>
        <fullName>SWR1-complex protein 7</fullName>
    </recommendedName>
</protein>
<dbReference type="EMBL" id="CR382125">
    <property type="protein sequence ID" value="CAG99267.1"/>
    <property type="molecule type" value="Genomic_DNA"/>
</dbReference>
<dbReference type="RefSeq" id="XP_454180.1">
    <property type="nucleotide sequence ID" value="XM_454180.1"/>
</dbReference>
<dbReference type="SMR" id="Q6CPF9"/>
<dbReference type="FunCoup" id="Q6CPF9">
    <property type="interactions" value="78"/>
</dbReference>
<dbReference type="STRING" id="284590.Q6CPF9"/>
<dbReference type="PaxDb" id="284590-Q6CPF9"/>
<dbReference type="KEGG" id="kla:KLLA0_E05215g"/>
<dbReference type="eggNOG" id="ENOG502S4GP">
    <property type="taxonomic scope" value="Eukaryota"/>
</dbReference>
<dbReference type="HOGENOM" id="CLU_157410_0_0_1"/>
<dbReference type="InParanoid" id="Q6CPF9"/>
<dbReference type="OMA" id="TLANHYY"/>
<dbReference type="Proteomes" id="UP000000598">
    <property type="component" value="Chromosome E"/>
</dbReference>
<dbReference type="GO" id="GO:0005634">
    <property type="term" value="C:nucleus"/>
    <property type="evidence" value="ECO:0007669"/>
    <property type="project" value="UniProtKB-SubCell"/>
</dbReference>
<dbReference type="GO" id="GO:0006325">
    <property type="term" value="P:chromatin organization"/>
    <property type="evidence" value="ECO:0007669"/>
    <property type="project" value="UniProtKB-KW"/>
</dbReference>
<dbReference type="InterPro" id="IPR020195">
    <property type="entry name" value="SWR1_Swc7"/>
</dbReference>
<dbReference type="Pfam" id="PF17330">
    <property type="entry name" value="SWC7"/>
    <property type="match status" value="1"/>
</dbReference>
<organism>
    <name type="scientific">Kluyveromyces lactis (strain ATCC 8585 / CBS 2359 / DSM 70799 / NBRC 1267 / NRRL Y-1140 / WM37)</name>
    <name type="common">Yeast</name>
    <name type="synonym">Candida sphaerica</name>
    <dbReference type="NCBI Taxonomy" id="284590"/>
    <lineage>
        <taxon>Eukaryota</taxon>
        <taxon>Fungi</taxon>
        <taxon>Dikarya</taxon>
        <taxon>Ascomycota</taxon>
        <taxon>Saccharomycotina</taxon>
        <taxon>Saccharomycetes</taxon>
        <taxon>Saccharomycetales</taxon>
        <taxon>Saccharomycetaceae</taxon>
        <taxon>Kluyveromyces</taxon>
    </lineage>
</organism>
<accession>Q6CPF9</accession>
<gene>
    <name type="primary">SWC7</name>
    <name type="ordered locus">KLLA0E05159g</name>
</gene>
<comment type="function">
    <text evidence="1">Component of the SWR1 complex which mediates the ATP-dependent exchange of histone H2A for the H2A variant HZT1 leading to transcriptional regulation of selected genes by chromatin remodeling.</text>
</comment>
<comment type="subunit">
    <text evidence="1">Component of the SWR1 chromatin remodeling complex.</text>
</comment>
<comment type="subcellular location">
    <subcellularLocation>
        <location evidence="1">Nucleus</location>
    </subcellularLocation>
</comment>
<comment type="similarity">
    <text evidence="2">Belongs to the SWC7 family.</text>
</comment>
<feature type="chain" id="PRO_0000076349" description="SWR1-complex protein 7">
    <location>
        <begin position="1"/>
        <end position="125"/>
    </location>
</feature>
<reference key="1">
    <citation type="journal article" date="2004" name="Nature">
        <title>Genome evolution in yeasts.</title>
        <authorList>
            <person name="Dujon B."/>
            <person name="Sherman D."/>
            <person name="Fischer G."/>
            <person name="Durrens P."/>
            <person name="Casaregola S."/>
            <person name="Lafontaine I."/>
            <person name="de Montigny J."/>
            <person name="Marck C."/>
            <person name="Neuveglise C."/>
            <person name="Talla E."/>
            <person name="Goffard N."/>
            <person name="Frangeul L."/>
            <person name="Aigle M."/>
            <person name="Anthouard V."/>
            <person name="Babour A."/>
            <person name="Barbe V."/>
            <person name="Barnay S."/>
            <person name="Blanchin S."/>
            <person name="Beckerich J.-M."/>
            <person name="Beyne E."/>
            <person name="Bleykasten C."/>
            <person name="Boisrame A."/>
            <person name="Boyer J."/>
            <person name="Cattolico L."/>
            <person name="Confanioleri F."/>
            <person name="de Daruvar A."/>
            <person name="Despons L."/>
            <person name="Fabre E."/>
            <person name="Fairhead C."/>
            <person name="Ferry-Dumazet H."/>
            <person name="Groppi A."/>
            <person name="Hantraye F."/>
            <person name="Hennequin C."/>
            <person name="Jauniaux N."/>
            <person name="Joyet P."/>
            <person name="Kachouri R."/>
            <person name="Kerrest A."/>
            <person name="Koszul R."/>
            <person name="Lemaire M."/>
            <person name="Lesur I."/>
            <person name="Ma L."/>
            <person name="Muller H."/>
            <person name="Nicaud J.-M."/>
            <person name="Nikolski M."/>
            <person name="Oztas S."/>
            <person name="Ozier-Kalogeropoulos O."/>
            <person name="Pellenz S."/>
            <person name="Potier S."/>
            <person name="Richard G.-F."/>
            <person name="Straub M.-L."/>
            <person name="Suleau A."/>
            <person name="Swennen D."/>
            <person name="Tekaia F."/>
            <person name="Wesolowski-Louvel M."/>
            <person name="Westhof E."/>
            <person name="Wirth B."/>
            <person name="Zeniou-Meyer M."/>
            <person name="Zivanovic Y."/>
            <person name="Bolotin-Fukuhara M."/>
            <person name="Thierry A."/>
            <person name="Bouchier C."/>
            <person name="Caudron B."/>
            <person name="Scarpelli C."/>
            <person name="Gaillardin C."/>
            <person name="Weissenbach J."/>
            <person name="Wincker P."/>
            <person name="Souciet J.-L."/>
        </authorList>
    </citation>
    <scope>NUCLEOTIDE SEQUENCE [LARGE SCALE GENOMIC DNA]</scope>
    <source>
        <strain>ATCC 8585 / CBS 2359 / DSM 70799 / NBRC 1267 / NRRL Y-1140 / WM37</strain>
    </source>
</reference>
<keyword id="KW-0010">Activator</keyword>
<keyword id="KW-0156">Chromatin regulator</keyword>
<keyword id="KW-0539">Nucleus</keyword>
<keyword id="KW-1185">Reference proteome</keyword>
<keyword id="KW-0804">Transcription</keyword>
<keyword id="KW-0805">Transcription regulation</keyword>
<name>SWC7_KLULA</name>
<proteinExistence type="inferred from homology"/>
<evidence type="ECO:0000250" key="1"/>
<evidence type="ECO:0000305" key="2"/>
<sequence length="125" mass="14399">MSTQNDSIALLLLQITLYHQQELAHADSSLSLDELLVEPIVDNTVVEKFTSHSMVQIYAPELAPLNIRSIKGLISDLFTNTNIQEPKNLITLANHYYSERLNYLQEEKIPELIQQMKDEYRKLAE</sequence>